<keyword id="KW-0025">Alternative splicing</keyword>
<keyword id="KW-0326">Glycosidase</keyword>
<keyword id="KW-0378">Hydrolase</keyword>
<keyword id="KW-1185">Reference proteome</keyword>
<name>GLBL3_MOUSE</name>
<sequence>MAIFFLPTVLSGFAPHSEEVFKSPARFSWSNLTPSELKNRFVGLSTKTNALGKAYFTLEGHKFMIVGGSIHYFRVPREYWKDRLLKLQACGFNTVTTYIPWNLHEQERGKFDFSEILDLEAYVLLAKTIGLWVILRPGPYICAEVDLGGLPSWLLRNPVTDLRTTNKGFIEAVDKYFDHLIPKILPLQYRHGGPVIAVQVENEYGSFQKDRNYMNYLKKALLKRGIVELLLTSDDKDGIQIGSVNGALTTINMNSFTKDSFIKLHKMQSDKPIMIMEYWTGWYDSWGSKHIEKSAEEIRHTVYKFISYGLSFNMYMFHGGTNFGFINGGRYENHHISVVTSYDYDAVLSEAGDYTEKYFKLRKLFASGSARPLPPLPPLIPKAIYPSVNLSFYLPLFDILPYLNQPVMLHTPVTMENLPINNGSGQPFGLVLYETSICSGGSLFASVHDSAQVFLNDQSIGILDENHEVLQIPKIQGCQLLRILVENQGRINYSWRIQSEQKGLKEVVSIDGLLLTNFTIYSLDMKMSFFKRLRSASWRLAPKTYNGPAFYWGILNAGSSPTDTFLHLPNWHYGFVFINGRNLGRYWDIGPQRTLYLPGPWLHPEDNEVIVFEKIEKGFDIQTRKKPQLQECYETGSGLPDAAGDADPC</sequence>
<evidence type="ECO:0000250" key="1"/>
<evidence type="ECO:0000303" key="2">
    <source>
    </source>
</evidence>
<evidence type="ECO:0000305" key="3"/>
<comment type="alternative products">
    <event type="alternative splicing"/>
    <isoform>
        <id>A2RSQ1-1</id>
        <name>1</name>
        <sequence type="displayed"/>
    </isoform>
    <isoform>
        <id>A2RSQ1-2</id>
        <name>2</name>
        <sequence type="described" ref="VSP_024289"/>
    </isoform>
</comment>
<comment type="similarity">
    <text evidence="3">Belongs to the glycosyl hydrolase 35 family.</text>
</comment>
<accession>A2RSQ1</accession>
<accession>Q9D5X3</accession>
<organism>
    <name type="scientific">Mus musculus</name>
    <name type="common">Mouse</name>
    <dbReference type="NCBI Taxonomy" id="10090"/>
    <lineage>
        <taxon>Eukaryota</taxon>
        <taxon>Metazoa</taxon>
        <taxon>Chordata</taxon>
        <taxon>Craniata</taxon>
        <taxon>Vertebrata</taxon>
        <taxon>Euteleostomi</taxon>
        <taxon>Mammalia</taxon>
        <taxon>Eutheria</taxon>
        <taxon>Euarchontoglires</taxon>
        <taxon>Glires</taxon>
        <taxon>Rodentia</taxon>
        <taxon>Myomorpha</taxon>
        <taxon>Muroidea</taxon>
        <taxon>Muridae</taxon>
        <taxon>Murinae</taxon>
        <taxon>Mus</taxon>
        <taxon>Mus</taxon>
    </lineage>
</organism>
<protein>
    <recommendedName>
        <fullName>Beta-galactosidase-1-like protein 3</fullName>
        <ecNumber>3.2.1.-</ecNumber>
    </recommendedName>
</protein>
<feature type="chain" id="PRO_0000283029" description="Beta-galactosidase-1-like protein 3">
    <location>
        <begin position="1"/>
        <end position="649"/>
    </location>
</feature>
<feature type="active site" description="Proton donor" evidence="1">
    <location>
        <position position="203"/>
    </location>
</feature>
<feature type="active site" description="Nucleophile" evidence="1">
    <location>
        <position position="277"/>
    </location>
</feature>
<feature type="splice variant" id="VSP_024289" description="In isoform 2." evidence="2">
    <location>
        <begin position="1"/>
        <end position="63"/>
    </location>
</feature>
<reference key="1">
    <citation type="journal article" date="2005" name="Science">
        <title>The transcriptional landscape of the mammalian genome.</title>
        <authorList>
            <person name="Carninci P."/>
            <person name="Kasukawa T."/>
            <person name="Katayama S."/>
            <person name="Gough J."/>
            <person name="Frith M.C."/>
            <person name="Maeda N."/>
            <person name="Oyama R."/>
            <person name="Ravasi T."/>
            <person name="Lenhard B."/>
            <person name="Wells C."/>
            <person name="Kodzius R."/>
            <person name="Shimokawa K."/>
            <person name="Bajic V.B."/>
            <person name="Brenner S.E."/>
            <person name="Batalov S."/>
            <person name="Forrest A.R."/>
            <person name="Zavolan M."/>
            <person name="Davis M.J."/>
            <person name="Wilming L.G."/>
            <person name="Aidinis V."/>
            <person name="Allen J.E."/>
            <person name="Ambesi-Impiombato A."/>
            <person name="Apweiler R."/>
            <person name="Aturaliya R.N."/>
            <person name="Bailey T.L."/>
            <person name="Bansal M."/>
            <person name="Baxter L."/>
            <person name="Beisel K.W."/>
            <person name="Bersano T."/>
            <person name="Bono H."/>
            <person name="Chalk A.M."/>
            <person name="Chiu K.P."/>
            <person name="Choudhary V."/>
            <person name="Christoffels A."/>
            <person name="Clutterbuck D.R."/>
            <person name="Crowe M.L."/>
            <person name="Dalla E."/>
            <person name="Dalrymple B.P."/>
            <person name="de Bono B."/>
            <person name="Della Gatta G."/>
            <person name="di Bernardo D."/>
            <person name="Down T."/>
            <person name="Engstrom P."/>
            <person name="Fagiolini M."/>
            <person name="Faulkner G."/>
            <person name="Fletcher C.F."/>
            <person name="Fukushima T."/>
            <person name="Furuno M."/>
            <person name="Futaki S."/>
            <person name="Gariboldi M."/>
            <person name="Georgii-Hemming P."/>
            <person name="Gingeras T.R."/>
            <person name="Gojobori T."/>
            <person name="Green R.E."/>
            <person name="Gustincich S."/>
            <person name="Harbers M."/>
            <person name="Hayashi Y."/>
            <person name="Hensch T.K."/>
            <person name="Hirokawa N."/>
            <person name="Hill D."/>
            <person name="Huminiecki L."/>
            <person name="Iacono M."/>
            <person name="Ikeo K."/>
            <person name="Iwama A."/>
            <person name="Ishikawa T."/>
            <person name="Jakt M."/>
            <person name="Kanapin A."/>
            <person name="Katoh M."/>
            <person name="Kawasawa Y."/>
            <person name="Kelso J."/>
            <person name="Kitamura H."/>
            <person name="Kitano H."/>
            <person name="Kollias G."/>
            <person name="Krishnan S.P."/>
            <person name="Kruger A."/>
            <person name="Kummerfeld S.K."/>
            <person name="Kurochkin I.V."/>
            <person name="Lareau L.F."/>
            <person name="Lazarevic D."/>
            <person name="Lipovich L."/>
            <person name="Liu J."/>
            <person name="Liuni S."/>
            <person name="McWilliam S."/>
            <person name="Madan Babu M."/>
            <person name="Madera M."/>
            <person name="Marchionni L."/>
            <person name="Matsuda H."/>
            <person name="Matsuzawa S."/>
            <person name="Miki H."/>
            <person name="Mignone F."/>
            <person name="Miyake S."/>
            <person name="Morris K."/>
            <person name="Mottagui-Tabar S."/>
            <person name="Mulder N."/>
            <person name="Nakano N."/>
            <person name="Nakauchi H."/>
            <person name="Ng P."/>
            <person name="Nilsson R."/>
            <person name="Nishiguchi S."/>
            <person name="Nishikawa S."/>
            <person name="Nori F."/>
            <person name="Ohara O."/>
            <person name="Okazaki Y."/>
            <person name="Orlando V."/>
            <person name="Pang K.C."/>
            <person name="Pavan W.J."/>
            <person name="Pavesi G."/>
            <person name="Pesole G."/>
            <person name="Petrovsky N."/>
            <person name="Piazza S."/>
            <person name="Reed J."/>
            <person name="Reid J.F."/>
            <person name="Ring B.Z."/>
            <person name="Ringwald M."/>
            <person name="Rost B."/>
            <person name="Ruan Y."/>
            <person name="Salzberg S.L."/>
            <person name="Sandelin A."/>
            <person name="Schneider C."/>
            <person name="Schoenbach C."/>
            <person name="Sekiguchi K."/>
            <person name="Semple C.A."/>
            <person name="Seno S."/>
            <person name="Sessa L."/>
            <person name="Sheng Y."/>
            <person name="Shibata Y."/>
            <person name="Shimada H."/>
            <person name="Shimada K."/>
            <person name="Silva D."/>
            <person name="Sinclair B."/>
            <person name="Sperling S."/>
            <person name="Stupka E."/>
            <person name="Sugiura K."/>
            <person name="Sultana R."/>
            <person name="Takenaka Y."/>
            <person name="Taki K."/>
            <person name="Tammoja K."/>
            <person name="Tan S.L."/>
            <person name="Tang S."/>
            <person name="Taylor M.S."/>
            <person name="Tegner J."/>
            <person name="Teichmann S.A."/>
            <person name="Ueda H.R."/>
            <person name="van Nimwegen E."/>
            <person name="Verardo R."/>
            <person name="Wei C.L."/>
            <person name="Yagi K."/>
            <person name="Yamanishi H."/>
            <person name="Zabarovsky E."/>
            <person name="Zhu S."/>
            <person name="Zimmer A."/>
            <person name="Hide W."/>
            <person name="Bult C."/>
            <person name="Grimmond S.M."/>
            <person name="Teasdale R.D."/>
            <person name="Liu E.T."/>
            <person name="Brusic V."/>
            <person name="Quackenbush J."/>
            <person name="Wahlestedt C."/>
            <person name="Mattick J.S."/>
            <person name="Hume D.A."/>
            <person name="Kai C."/>
            <person name="Sasaki D."/>
            <person name="Tomaru Y."/>
            <person name="Fukuda S."/>
            <person name="Kanamori-Katayama M."/>
            <person name="Suzuki M."/>
            <person name="Aoki J."/>
            <person name="Arakawa T."/>
            <person name="Iida J."/>
            <person name="Imamura K."/>
            <person name="Itoh M."/>
            <person name="Kato T."/>
            <person name="Kawaji H."/>
            <person name="Kawagashira N."/>
            <person name="Kawashima T."/>
            <person name="Kojima M."/>
            <person name="Kondo S."/>
            <person name="Konno H."/>
            <person name="Nakano K."/>
            <person name="Ninomiya N."/>
            <person name="Nishio T."/>
            <person name="Okada M."/>
            <person name="Plessy C."/>
            <person name="Shibata K."/>
            <person name="Shiraki T."/>
            <person name="Suzuki S."/>
            <person name="Tagami M."/>
            <person name="Waki K."/>
            <person name="Watahiki A."/>
            <person name="Okamura-Oho Y."/>
            <person name="Suzuki H."/>
            <person name="Kawai J."/>
            <person name="Hayashizaki Y."/>
        </authorList>
    </citation>
    <scope>NUCLEOTIDE SEQUENCE [LARGE SCALE MRNA] (ISOFORM 2)</scope>
    <source>
        <strain>C57BL/6J</strain>
        <tissue>Testis</tissue>
    </source>
</reference>
<reference key="2">
    <citation type="journal article" date="2004" name="Genome Res.">
        <title>The status, quality, and expansion of the NIH full-length cDNA project: the Mammalian Gene Collection (MGC).</title>
        <authorList>
            <consortium name="The MGC Project Team"/>
        </authorList>
    </citation>
    <scope>NUCLEOTIDE SEQUENCE [LARGE SCALE MRNA] (ISOFORM 1)</scope>
    <source>
        <tissue>Brain</tissue>
    </source>
</reference>
<reference key="3">
    <citation type="journal article" date="2010" name="Cell">
        <title>A tissue-specific atlas of mouse protein phosphorylation and expression.</title>
        <authorList>
            <person name="Huttlin E.L."/>
            <person name="Jedrychowski M.P."/>
            <person name="Elias J.E."/>
            <person name="Goswami T."/>
            <person name="Rad R."/>
            <person name="Beausoleil S.A."/>
            <person name="Villen J."/>
            <person name="Haas W."/>
            <person name="Sowa M.E."/>
            <person name="Gygi S.P."/>
        </authorList>
    </citation>
    <scope>IDENTIFICATION BY MASS SPECTROMETRY [LARGE SCALE ANALYSIS]</scope>
    <source>
        <tissue>Testis</tissue>
    </source>
</reference>
<gene>
    <name type="primary">Glb1l3</name>
</gene>
<proteinExistence type="evidence at protein level"/>
<dbReference type="EC" id="3.2.1.-"/>
<dbReference type="EMBL" id="AK014852">
    <property type="protein sequence ID" value="BAB29584.1"/>
    <property type="molecule type" value="mRNA"/>
</dbReference>
<dbReference type="EMBL" id="BC132200">
    <property type="protein sequence ID" value="AAI32201.1"/>
    <property type="molecule type" value="mRNA"/>
</dbReference>
<dbReference type="EMBL" id="BC132202">
    <property type="protein sequence ID" value="AAI32203.1"/>
    <property type="molecule type" value="mRNA"/>
</dbReference>
<dbReference type="RefSeq" id="NP_001106794.1">
    <property type="nucleotide sequence ID" value="NM_001113323.1"/>
</dbReference>
<dbReference type="SMR" id="A2RSQ1"/>
<dbReference type="FunCoup" id="A2RSQ1">
    <property type="interactions" value="10"/>
</dbReference>
<dbReference type="STRING" id="10090.ENSMUSP00000147979"/>
<dbReference type="CAZy" id="GH35">
    <property type="family name" value="Glycoside Hydrolase Family 35"/>
</dbReference>
<dbReference type="iPTMnet" id="A2RSQ1"/>
<dbReference type="PhosphoSitePlus" id="A2RSQ1"/>
<dbReference type="PaxDb" id="10090-ENSMUSP00000034448"/>
<dbReference type="ProteomicsDB" id="268829">
    <molecule id="A2RSQ1-1"/>
</dbReference>
<dbReference type="ProteomicsDB" id="268830">
    <molecule id="A2RSQ1-2"/>
</dbReference>
<dbReference type="GeneID" id="70893"/>
<dbReference type="KEGG" id="mmu:70893"/>
<dbReference type="UCSC" id="uc009opw.2">
    <molecule id="A2RSQ1-1"/>
    <property type="organism name" value="mouse"/>
</dbReference>
<dbReference type="AGR" id="MGI:1918143"/>
<dbReference type="CTD" id="112937"/>
<dbReference type="MGI" id="MGI:1918143">
    <property type="gene designation" value="Glb1l3"/>
</dbReference>
<dbReference type="eggNOG" id="KOG0496">
    <property type="taxonomic scope" value="Eukaryota"/>
</dbReference>
<dbReference type="InParanoid" id="A2RSQ1"/>
<dbReference type="OrthoDB" id="1657402at2759"/>
<dbReference type="PhylomeDB" id="A2RSQ1"/>
<dbReference type="Reactome" id="R-MMU-2022857">
    <property type="pathway name" value="Keratan sulfate degradation"/>
</dbReference>
<dbReference type="Reactome" id="R-MMU-2024096">
    <property type="pathway name" value="HS-GAG degradation"/>
</dbReference>
<dbReference type="Reactome" id="R-MMU-9840310">
    <property type="pathway name" value="Glycosphingolipid catabolism"/>
</dbReference>
<dbReference type="BioGRID-ORCS" id="70893">
    <property type="hits" value="2 hits in 22 CRISPR screens"/>
</dbReference>
<dbReference type="PRO" id="PR:A2RSQ1"/>
<dbReference type="Proteomes" id="UP000000589">
    <property type="component" value="Unplaced"/>
</dbReference>
<dbReference type="RNAct" id="A2RSQ1">
    <property type="molecule type" value="protein"/>
</dbReference>
<dbReference type="GO" id="GO:0004565">
    <property type="term" value="F:beta-galactosidase activity"/>
    <property type="evidence" value="ECO:0007669"/>
    <property type="project" value="InterPro"/>
</dbReference>
<dbReference type="GO" id="GO:0005975">
    <property type="term" value="P:carbohydrate metabolic process"/>
    <property type="evidence" value="ECO:0007669"/>
    <property type="project" value="InterPro"/>
</dbReference>
<dbReference type="FunFam" id="2.60.120.260:FF:000049">
    <property type="entry name" value="Beta-galactosidase"/>
    <property type="match status" value="1"/>
</dbReference>
<dbReference type="FunFam" id="3.20.20.80:FF:000036">
    <property type="entry name" value="Beta-galactosidase"/>
    <property type="match status" value="1"/>
</dbReference>
<dbReference type="Gene3D" id="2.60.120.260">
    <property type="entry name" value="Galactose-binding domain-like"/>
    <property type="match status" value="2"/>
</dbReference>
<dbReference type="Gene3D" id="3.20.20.80">
    <property type="entry name" value="Glycosidases"/>
    <property type="match status" value="1"/>
</dbReference>
<dbReference type="InterPro" id="IPR026283">
    <property type="entry name" value="B-gal_1-like"/>
</dbReference>
<dbReference type="InterPro" id="IPR048912">
    <property type="entry name" value="BetaGal1-like_ABD1"/>
</dbReference>
<dbReference type="InterPro" id="IPR048913">
    <property type="entry name" value="BetaGal_gal-bd"/>
</dbReference>
<dbReference type="InterPro" id="IPR008979">
    <property type="entry name" value="Galactose-bd-like_sf"/>
</dbReference>
<dbReference type="InterPro" id="IPR031330">
    <property type="entry name" value="Gly_Hdrlase_35_cat"/>
</dbReference>
<dbReference type="InterPro" id="IPR019801">
    <property type="entry name" value="Glyco_hydro_35_CS"/>
</dbReference>
<dbReference type="InterPro" id="IPR001944">
    <property type="entry name" value="Glycoside_Hdrlase_35"/>
</dbReference>
<dbReference type="InterPro" id="IPR017853">
    <property type="entry name" value="Glycoside_hydrolase_SF"/>
</dbReference>
<dbReference type="PANTHER" id="PTHR23421">
    <property type="entry name" value="BETA-GALACTOSIDASE RELATED"/>
    <property type="match status" value="1"/>
</dbReference>
<dbReference type="Pfam" id="PF21317">
    <property type="entry name" value="BetaGal_ABD_1"/>
    <property type="match status" value="1"/>
</dbReference>
<dbReference type="Pfam" id="PF21467">
    <property type="entry name" value="BetaGal_gal-bd"/>
    <property type="match status" value="1"/>
</dbReference>
<dbReference type="Pfam" id="PF01301">
    <property type="entry name" value="Glyco_hydro_35"/>
    <property type="match status" value="1"/>
</dbReference>
<dbReference type="PIRSF" id="PIRSF006336">
    <property type="entry name" value="B-gal"/>
    <property type="match status" value="1"/>
</dbReference>
<dbReference type="PRINTS" id="PR00742">
    <property type="entry name" value="GLHYDRLASE35"/>
</dbReference>
<dbReference type="SUPFAM" id="SSF51445">
    <property type="entry name" value="(Trans)glycosidases"/>
    <property type="match status" value="1"/>
</dbReference>
<dbReference type="SUPFAM" id="SSF49785">
    <property type="entry name" value="Galactose-binding domain-like"/>
    <property type="match status" value="1"/>
</dbReference>
<dbReference type="PROSITE" id="PS01182">
    <property type="entry name" value="GLYCOSYL_HYDROL_F35"/>
    <property type="match status" value="1"/>
</dbReference>